<gene>
    <name type="primary">epd</name>
</gene>
<protein>
    <recommendedName>
        <fullName>Ependymin</fullName>
        <shortName>EPD</shortName>
    </recommendedName>
</protein>
<name>EPD_NOTCY</name>
<feature type="signal peptide" evidence="2">
    <location>
        <begin position="1"/>
        <end position="20"/>
    </location>
</feature>
<feature type="chain" id="PRO_0000008347" description="Ependymin">
    <location>
        <begin position="21"/>
        <end position="214"/>
    </location>
</feature>
<feature type="glycosylation site" description="N-linked (GlcNAc...) asparagine" evidence="2">
    <location>
        <position position="70"/>
    </location>
</feature>
<feature type="glycosylation site" description="N-linked (GlcNAc...) asparagine" evidence="2">
    <location>
        <position position="93"/>
    </location>
</feature>
<dbReference type="EMBL" id="U31357">
    <property type="protein sequence ID" value="AAC59753.1"/>
    <property type="molecule type" value="Genomic_DNA"/>
</dbReference>
<dbReference type="SMR" id="Q91130"/>
<dbReference type="GlyCosmos" id="Q91130">
    <property type="glycosylation" value="2 sites, No reported glycans"/>
</dbReference>
<dbReference type="GO" id="GO:0005576">
    <property type="term" value="C:extracellular region"/>
    <property type="evidence" value="ECO:0007669"/>
    <property type="project" value="UniProtKB-SubCell"/>
</dbReference>
<dbReference type="GO" id="GO:0005764">
    <property type="term" value="C:lysosome"/>
    <property type="evidence" value="ECO:0007669"/>
    <property type="project" value="TreeGrafter"/>
</dbReference>
<dbReference type="GO" id="GO:0005509">
    <property type="term" value="F:calcium ion binding"/>
    <property type="evidence" value="ECO:0007669"/>
    <property type="project" value="InterPro"/>
</dbReference>
<dbReference type="GO" id="GO:0007160">
    <property type="term" value="P:cell-matrix adhesion"/>
    <property type="evidence" value="ECO:0007669"/>
    <property type="project" value="InterPro"/>
</dbReference>
<dbReference type="InterPro" id="IPR001299">
    <property type="entry name" value="Ependymin"/>
</dbReference>
<dbReference type="InterPro" id="IPR018224">
    <property type="entry name" value="Ependymin_CS"/>
</dbReference>
<dbReference type="PANTHER" id="PTHR10697:SF5">
    <property type="entry name" value="EPENDYMIN-RELATED"/>
    <property type="match status" value="1"/>
</dbReference>
<dbReference type="PANTHER" id="PTHR10697">
    <property type="entry name" value="MAMMALIAN EPENDYMIN-RELATED PROTEIN 1"/>
    <property type="match status" value="1"/>
</dbReference>
<dbReference type="Pfam" id="PF00811">
    <property type="entry name" value="Ependymin"/>
    <property type="match status" value="1"/>
</dbReference>
<dbReference type="PRINTS" id="PR00317">
    <property type="entry name" value="EPENDYMIN"/>
</dbReference>
<dbReference type="SMART" id="SM00026">
    <property type="entry name" value="EPEND"/>
    <property type="match status" value="1"/>
</dbReference>
<dbReference type="PROSITE" id="PS00898">
    <property type="entry name" value="EPENDYMIN_1"/>
    <property type="match status" value="1"/>
</dbReference>
<dbReference type="PROSITE" id="PS00899">
    <property type="entry name" value="EPENDYMIN_2"/>
    <property type="match status" value="1"/>
</dbReference>
<comment type="function">
    <text evidence="1">May play a role in neural plasticity. May be involved during axon regeneration (By similarity).</text>
</comment>
<comment type="subunit">
    <text evidence="1">Forms disulfide-linked dimers.</text>
</comment>
<comment type="subcellular location">
    <subcellularLocation>
        <location>Secreted</location>
    </subcellularLocation>
</comment>
<comment type="PTM">
    <text evidence="1">Binds calcium through the terminal sialic acids.</text>
</comment>
<comment type="similarity">
    <text evidence="3">Belongs to the ependymin family.</text>
</comment>
<accession>Q91130</accession>
<proteinExistence type="inferred from homology"/>
<evidence type="ECO:0000250" key="1"/>
<evidence type="ECO:0000255" key="2"/>
<evidence type="ECO:0000305" key="3"/>
<reference key="1">
    <citation type="journal article" date="1996" name="Neurochem. Res.">
        <title>Genes encoding giant danio and golden shiner ependymin.</title>
        <authorList>
            <person name="Adams D.S."/>
            <person name="Kiyokawa M."/>
            <person name="Getman M.E."/>
            <person name="Shashoua V.E."/>
        </authorList>
    </citation>
    <scope>NUCLEOTIDE SEQUENCE [GENOMIC DNA]</scope>
    <source>
        <tissue>Brain</tissue>
    </source>
</reference>
<keyword id="KW-0106">Calcium</keyword>
<keyword id="KW-1015">Disulfide bond</keyword>
<keyword id="KW-0325">Glycoprotein</keyword>
<keyword id="KW-0964">Secreted</keyword>
<keyword id="KW-0732">Signal</keyword>
<organism>
    <name type="scientific">Notemigonus crysoleucas</name>
    <name type="common">Golden shiner</name>
    <name type="synonym">Cyprinus crysoleucas</name>
    <dbReference type="NCBI Taxonomy" id="28800"/>
    <lineage>
        <taxon>Eukaryota</taxon>
        <taxon>Metazoa</taxon>
        <taxon>Chordata</taxon>
        <taxon>Craniata</taxon>
        <taxon>Vertebrata</taxon>
        <taxon>Euteleostomi</taxon>
        <taxon>Actinopterygii</taxon>
        <taxon>Neopterygii</taxon>
        <taxon>Teleostei</taxon>
        <taxon>Ostariophysi</taxon>
        <taxon>Cypriniformes</taxon>
        <taxon>Leuciscidae</taxon>
        <taxon>Leuciscinae</taxon>
        <taxon>Notemigonus</taxon>
    </lineage>
</organism>
<sequence>MHTVKLLCVVFSCLCAVAWASSHRQPCHSPPLTSGTMKVVSTGGHDLASGEFSYDSKASKFRFVEDTHANKTSHMDVLIHFEEGTLYEIDSKNESCKKETLQFRKHLMEIPPDATHESEIYMGSPTVIEQGLRVRVWHGKLPELHAHYSLSTTSCGCLPVSGSFYGKKKDLLFSFFGVEPEVDDPQAFVPPAYCEGVSFEEAPDDHSFFDLFHD</sequence>